<sequence>MEPAMSLCDLKRATRRKRRVRLKLRSLSSVRLSVFKSNRHFYAQLIDDEKGATLAAASTLEPDVLATAKRRVNSEAARVVARLFAGRLDGLDANYRKFVLDRGSCRYIGVVAAFADELRSLGFEF</sequence>
<feature type="chain" id="PRO_0000131199" description="Large ribosomal subunit protein uL18">
    <location>
        <begin position="1"/>
        <end position="125"/>
    </location>
</feature>
<proteinExistence type="inferred from homology"/>
<comment type="function">
    <text evidence="1">This is one of the proteins that bind and probably mediate the attachment of the 5S RNA into the large ribosomal subunit, where it forms part of the central protuberance.</text>
</comment>
<comment type="subunit">
    <text evidence="1">Part of the 50S ribosomal subunit; part of the 5S rRNA/L5/L18/L25 subcomplex. Contacts the 5S and 23S rRNAs.</text>
</comment>
<comment type="similarity">
    <text evidence="1">Belongs to the universal ribosomal protein uL18 family.</text>
</comment>
<dbReference type="EMBL" id="CP000030">
    <property type="protein sequence ID" value="AAV86806.1"/>
    <property type="molecule type" value="Genomic_DNA"/>
</dbReference>
<dbReference type="SMR" id="Q5PA74"/>
<dbReference type="KEGG" id="ama:AM895"/>
<dbReference type="HOGENOM" id="CLU_098841_0_1_5"/>
<dbReference type="GO" id="GO:0022625">
    <property type="term" value="C:cytosolic large ribosomal subunit"/>
    <property type="evidence" value="ECO:0007669"/>
    <property type="project" value="TreeGrafter"/>
</dbReference>
<dbReference type="GO" id="GO:0008097">
    <property type="term" value="F:5S rRNA binding"/>
    <property type="evidence" value="ECO:0007669"/>
    <property type="project" value="TreeGrafter"/>
</dbReference>
<dbReference type="GO" id="GO:0003735">
    <property type="term" value="F:structural constituent of ribosome"/>
    <property type="evidence" value="ECO:0007669"/>
    <property type="project" value="InterPro"/>
</dbReference>
<dbReference type="GO" id="GO:0006412">
    <property type="term" value="P:translation"/>
    <property type="evidence" value="ECO:0007669"/>
    <property type="project" value="UniProtKB-UniRule"/>
</dbReference>
<dbReference type="CDD" id="cd00432">
    <property type="entry name" value="Ribosomal_L18_L5e"/>
    <property type="match status" value="1"/>
</dbReference>
<dbReference type="Gene3D" id="3.30.420.100">
    <property type="match status" value="1"/>
</dbReference>
<dbReference type="HAMAP" id="MF_01337_B">
    <property type="entry name" value="Ribosomal_uL18_B"/>
    <property type="match status" value="1"/>
</dbReference>
<dbReference type="InterPro" id="IPR004389">
    <property type="entry name" value="Ribosomal_uL18_bac-type"/>
</dbReference>
<dbReference type="InterPro" id="IPR005484">
    <property type="entry name" value="Ribosomal_uL18_bac/euk"/>
</dbReference>
<dbReference type="NCBIfam" id="TIGR00060">
    <property type="entry name" value="L18_bact"/>
    <property type="match status" value="1"/>
</dbReference>
<dbReference type="PANTHER" id="PTHR12899">
    <property type="entry name" value="39S RIBOSOMAL PROTEIN L18, MITOCHONDRIAL"/>
    <property type="match status" value="1"/>
</dbReference>
<dbReference type="PANTHER" id="PTHR12899:SF3">
    <property type="entry name" value="LARGE RIBOSOMAL SUBUNIT PROTEIN UL18M"/>
    <property type="match status" value="1"/>
</dbReference>
<dbReference type="Pfam" id="PF00861">
    <property type="entry name" value="Ribosomal_L18p"/>
    <property type="match status" value="1"/>
</dbReference>
<dbReference type="SUPFAM" id="SSF53137">
    <property type="entry name" value="Translational machinery components"/>
    <property type="match status" value="1"/>
</dbReference>
<evidence type="ECO:0000255" key="1">
    <source>
        <dbReference type="HAMAP-Rule" id="MF_01337"/>
    </source>
</evidence>
<evidence type="ECO:0000305" key="2"/>
<reference key="1">
    <citation type="journal article" date="2005" name="Proc. Natl. Acad. Sci. U.S.A.">
        <title>Complete genome sequencing of Anaplasma marginale reveals that the surface is skewed to two superfamilies of outer membrane proteins.</title>
        <authorList>
            <person name="Brayton K.A."/>
            <person name="Kappmeyer L.S."/>
            <person name="Herndon D.R."/>
            <person name="Dark M.J."/>
            <person name="Tibbals D.L."/>
            <person name="Palmer G.H."/>
            <person name="McGuire T.C."/>
            <person name="Knowles D.P. Jr."/>
        </authorList>
    </citation>
    <scope>NUCLEOTIDE SEQUENCE [LARGE SCALE GENOMIC DNA]</scope>
    <source>
        <strain>St. Maries</strain>
    </source>
</reference>
<protein>
    <recommendedName>
        <fullName evidence="1">Large ribosomal subunit protein uL18</fullName>
    </recommendedName>
    <alternativeName>
        <fullName evidence="2">50S ribosomal protein L18</fullName>
    </alternativeName>
</protein>
<name>RL18_ANAMM</name>
<accession>Q5PA74</accession>
<keyword id="KW-0687">Ribonucleoprotein</keyword>
<keyword id="KW-0689">Ribosomal protein</keyword>
<keyword id="KW-0694">RNA-binding</keyword>
<keyword id="KW-0699">rRNA-binding</keyword>
<organism>
    <name type="scientific">Anaplasma marginale (strain St. Maries)</name>
    <dbReference type="NCBI Taxonomy" id="234826"/>
    <lineage>
        <taxon>Bacteria</taxon>
        <taxon>Pseudomonadati</taxon>
        <taxon>Pseudomonadota</taxon>
        <taxon>Alphaproteobacteria</taxon>
        <taxon>Rickettsiales</taxon>
        <taxon>Anaplasmataceae</taxon>
        <taxon>Anaplasma</taxon>
    </lineage>
</organism>
<gene>
    <name evidence="1" type="primary">rplR</name>
    <name type="ordered locus">AM895</name>
</gene>